<comment type="function">
    <text evidence="1">Component of the A-type ATP synthase that produces ATP from ADP in the presence of a proton gradient across the membrane. The B chain is a regulatory subunit.</text>
</comment>
<comment type="subunit">
    <text evidence="1">Has multiple subunits with at least A(3), B(3), C, D, E, F, H, I and proteolipid K(x).</text>
</comment>
<comment type="subcellular location">
    <subcellularLocation>
        <location evidence="1">Cell membrane</location>
        <topology evidence="1">Peripheral membrane protein</topology>
    </subcellularLocation>
</comment>
<comment type="similarity">
    <text evidence="1">Belongs to the ATPase alpha/beta chains family.</text>
</comment>
<protein>
    <recommendedName>
        <fullName evidence="1">A-type ATP synthase subunit B</fullName>
    </recommendedName>
</protein>
<dbReference type="EMBL" id="AE009950">
    <property type="protein sequence ID" value="AAL80307.1"/>
    <property type="molecule type" value="Genomic_DNA"/>
</dbReference>
<dbReference type="RefSeq" id="WP_011011296.1">
    <property type="nucleotide sequence ID" value="NZ_CP023154.1"/>
</dbReference>
<dbReference type="SMR" id="Q8U4A5"/>
<dbReference type="STRING" id="186497.PF0183"/>
<dbReference type="PaxDb" id="186497-PF0183"/>
<dbReference type="KEGG" id="pfu:PF0183"/>
<dbReference type="PATRIC" id="fig|186497.12.peg.190"/>
<dbReference type="eggNOG" id="arCOG00865">
    <property type="taxonomic scope" value="Archaea"/>
</dbReference>
<dbReference type="HOGENOM" id="CLU_022916_0_0_2"/>
<dbReference type="OrthoDB" id="32941at2157"/>
<dbReference type="PhylomeDB" id="Q8U4A5"/>
<dbReference type="Proteomes" id="UP000001013">
    <property type="component" value="Chromosome"/>
</dbReference>
<dbReference type="GO" id="GO:0005886">
    <property type="term" value="C:plasma membrane"/>
    <property type="evidence" value="ECO:0007669"/>
    <property type="project" value="UniProtKB-SubCell"/>
</dbReference>
<dbReference type="GO" id="GO:0033178">
    <property type="term" value="C:proton-transporting two-sector ATPase complex, catalytic domain"/>
    <property type="evidence" value="ECO:0007669"/>
    <property type="project" value="InterPro"/>
</dbReference>
<dbReference type="GO" id="GO:0005524">
    <property type="term" value="F:ATP binding"/>
    <property type="evidence" value="ECO:0007669"/>
    <property type="project" value="UniProtKB-UniRule"/>
</dbReference>
<dbReference type="GO" id="GO:0046933">
    <property type="term" value="F:proton-transporting ATP synthase activity, rotational mechanism"/>
    <property type="evidence" value="ECO:0007669"/>
    <property type="project" value="UniProtKB-UniRule"/>
</dbReference>
<dbReference type="GO" id="GO:0042777">
    <property type="term" value="P:proton motive force-driven plasma membrane ATP synthesis"/>
    <property type="evidence" value="ECO:0007669"/>
    <property type="project" value="UniProtKB-UniRule"/>
</dbReference>
<dbReference type="CDD" id="cd18112">
    <property type="entry name" value="ATP-synt_V_A-type_beta_C"/>
    <property type="match status" value="1"/>
</dbReference>
<dbReference type="CDD" id="cd18118">
    <property type="entry name" value="ATP-synt_V_A-type_beta_N"/>
    <property type="match status" value="1"/>
</dbReference>
<dbReference type="CDD" id="cd01135">
    <property type="entry name" value="V_A-ATPase_B"/>
    <property type="match status" value="1"/>
</dbReference>
<dbReference type="Gene3D" id="3.40.50.12240">
    <property type="match status" value="1"/>
</dbReference>
<dbReference type="HAMAP" id="MF_00310">
    <property type="entry name" value="ATP_synth_B_arch"/>
    <property type="match status" value="1"/>
</dbReference>
<dbReference type="InterPro" id="IPR055190">
    <property type="entry name" value="ATP-synt_VA_C"/>
</dbReference>
<dbReference type="InterPro" id="IPR020003">
    <property type="entry name" value="ATPase_a/bsu_AS"/>
</dbReference>
<dbReference type="InterPro" id="IPR005724">
    <property type="entry name" value="ATPase_A1-cplx_bsu"/>
</dbReference>
<dbReference type="InterPro" id="IPR004100">
    <property type="entry name" value="ATPase_F1/V1/A1_a/bsu_N"/>
</dbReference>
<dbReference type="InterPro" id="IPR000194">
    <property type="entry name" value="ATPase_F1/V1/A1_a/bsu_nucl-bd"/>
</dbReference>
<dbReference type="InterPro" id="IPR027417">
    <property type="entry name" value="P-loop_NTPase"/>
</dbReference>
<dbReference type="InterPro" id="IPR022879">
    <property type="entry name" value="V-ATPase_su_B/beta"/>
</dbReference>
<dbReference type="NCBIfam" id="TIGR01041">
    <property type="entry name" value="ATP_syn_B_arch"/>
    <property type="match status" value="1"/>
</dbReference>
<dbReference type="NCBIfam" id="NF003235">
    <property type="entry name" value="PRK04196.1"/>
    <property type="match status" value="1"/>
</dbReference>
<dbReference type="PANTHER" id="PTHR43389">
    <property type="entry name" value="V-TYPE PROTON ATPASE SUBUNIT B"/>
    <property type="match status" value="1"/>
</dbReference>
<dbReference type="PANTHER" id="PTHR43389:SF4">
    <property type="entry name" value="V-TYPE PROTON ATPASE SUBUNIT B"/>
    <property type="match status" value="1"/>
</dbReference>
<dbReference type="Pfam" id="PF00006">
    <property type="entry name" value="ATP-synt_ab"/>
    <property type="match status" value="1"/>
</dbReference>
<dbReference type="Pfam" id="PF02874">
    <property type="entry name" value="ATP-synt_ab_N"/>
    <property type="match status" value="1"/>
</dbReference>
<dbReference type="Pfam" id="PF22919">
    <property type="entry name" value="ATP-synt_VA_C"/>
    <property type="match status" value="1"/>
</dbReference>
<dbReference type="PIRSF" id="PIRSF039114">
    <property type="entry name" value="V-ATPsynth_beta/V-ATPase_B"/>
    <property type="match status" value="1"/>
</dbReference>
<dbReference type="SUPFAM" id="SSF47917">
    <property type="entry name" value="C-terminal domain of alpha and beta subunits of F1 ATP synthase"/>
    <property type="match status" value="1"/>
</dbReference>
<dbReference type="SUPFAM" id="SSF52540">
    <property type="entry name" value="P-loop containing nucleoside triphosphate hydrolases"/>
    <property type="match status" value="1"/>
</dbReference>
<dbReference type="PROSITE" id="PS00152">
    <property type="entry name" value="ATPASE_ALPHA_BETA"/>
    <property type="match status" value="1"/>
</dbReference>
<evidence type="ECO:0000255" key="1">
    <source>
        <dbReference type="HAMAP-Rule" id="MF_00310"/>
    </source>
</evidence>
<accession>Q8U4A5</accession>
<reference key="1">
    <citation type="journal article" date="1999" name="Genetics">
        <title>Divergence of the hyperthermophilic archaea Pyrococcus furiosus and P. horikoshii inferred from complete genomic sequences.</title>
        <authorList>
            <person name="Maeder D.L."/>
            <person name="Weiss R.B."/>
            <person name="Dunn D.M."/>
            <person name="Cherry J.L."/>
            <person name="Gonzalez J.M."/>
            <person name="DiRuggiero J."/>
            <person name="Robb F.T."/>
        </authorList>
    </citation>
    <scope>NUCLEOTIDE SEQUENCE [LARGE SCALE GENOMIC DNA]</scope>
    <source>
        <strain>ATCC 43587 / DSM 3638 / JCM 8422 / Vc1</strain>
    </source>
</reference>
<feature type="chain" id="PRO_0000144663" description="A-type ATP synthase subunit B">
    <location>
        <begin position="1"/>
        <end position="462"/>
    </location>
</feature>
<sequence>MAKEYSTISRIYGPLMIVEGVKGVAYGEVVEIETEWGEKRKGQVLDARENLAIVQVFEGTRDLDIKTTRVRFTGETLKVPVSMDMLGRIFNGIGKPIDGGPEIIPEDRRDVHGAPLNPVARAYPRDFIQTGISAIDGMNTLVRGQKLPIFSGSGLPHNKLAAQIARQAKVLGEEESFAVVFAAMGITYEEANFFKKSFEETGAIERAVLFLNLADDPAIERIITPRMALTVAEYLAFDYDMHVLVILTDMTNYCEALREISAAREEVPGRRGYPGYMYTDLATIYERAGRVRGKKGSITQMPILTMPDDDITHPIPDLTGYITEGQIVLSRDLHRRGIYPPIDVLPSLSRLMKDGIGKGRTREDHPQLAQQLYAAYAEGRSLRDLVAVVGEEALSETDKKYLEFADRFEREFVAQGYDEDRSIEETLDLGWELLAILPETELKRVKKEMIMKYHPKYRGRSS</sequence>
<proteinExistence type="inferred from homology"/>
<gene>
    <name evidence="1" type="primary">atpB</name>
    <name type="ordered locus">PF0183</name>
</gene>
<organism>
    <name type="scientific">Pyrococcus furiosus (strain ATCC 43587 / DSM 3638 / JCM 8422 / Vc1)</name>
    <dbReference type="NCBI Taxonomy" id="186497"/>
    <lineage>
        <taxon>Archaea</taxon>
        <taxon>Methanobacteriati</taxon>
        <taxon>Methanobacteriota</taxon>
        <taxon>Thermococci</taxon>
        <taxon>Thermococcales</taxon>
        <taxon>Thermococcaceae</taxon>
        <taxon>Pyrococcus</taxon>
    </lineage>
</organism>
<name>AATB_PYRFU</name>
<keyword id="KW-0066">ATP synthesis</keyword>
<keyword id="KW-1003">Cell membrane</keyword>
<keyword id="KW-0375">Hydrogen ion transport</keyword>
<keyword id="KW-0406">Ion transport</keyword>
<keyword id="KW-0472">Membrane</keyword>
<keyword id="KW-1185">Reference proteome</keyword>
<keyword id="KW-0813">Transport</keyword>